<organism>
    <name type="scientific">Salmonella typhimurium (strain LT2 / SGSC1412 / ATCC 700720)</name>
    <dbReference type="NCBI Taxonomy" id="99287"/>
    <lineage>
        <taxon>Bacteria</taxon>
        <taxon>Pseudomonadati</taxon>
        <taxon>Pseudomonadota</taxon>
        <taxon>Gammaproteobacteria</taxon>
        <taxon>Enterobacterales</taxon>
        <taxon>Enterobacteriaceae</taxon>
        <taxon>Salmonella</taxon>
    </lineage>
</organism>
<comment type="function">
    <text evidence="1">One of the early assembly proteins it binds 23S rRNA. One of the proteins that surrounds the polypeptide exit tunnel on the outside of the ribosome. Forms the main docking site for trigger factor binding to the ribosome.</text>
</comment>
<comment type="subunit">
    <text evidence="1">Part of the 50S ribosomal subunit. Contacts protein L29, and trigger factor when it is bound to the ribosome.</text>
</comment>
<comment type="similarity">
    <text evidence="1">Belongs to the universal ribosomal protein uL23 family.</text>
</comment>
<protein>
    <recommendedName>
        <fullName evidence="1">Large ribosomal subunit protein uL23</fullName>
    </recommendedName>
    <alternativeName>
        <fullName evidence="2">50S ribosomal protein L23</fullName>
    </alternativeName>
</protein>
<accession>Q7CPL3</accession>
<evidence type="ECO:0000255" key="1">
    <source>
        <dbReference type="HAMAP-Rule" id="MF_01369"/>
    </source>
</evidence>
<evidence type="ECO:0000305" key="2"/>
<feature type="chain" id="PRO_0000272838" description="Large ribosomal subunit protein uL23">
    <location>
        <begin position="1"/>
        <end position="100"/>
    </location>
</feature>
<proteinExistence type="inferred from homology"/>
<sequence>MIREERLLKVLRAPHVSEKASTAMEKTNTIVLKVAKDATKAEIKAAVQKLFEVEVEVVNTLVVKGKVKRHGQRIGRRSDWKKAYVTLKEGQNLDFVGGAE</sequence>
<gene>
    <name evidence="1" type="primary">rplW</name>
    <name type="ordered locus">STM3438</name>
</gene>
<dbReference type="EMBL" id="AE006468">
    <property type="protein sequence ID" value="AAL22301.1"/>
    <property type="molecule type" value="Genomic_DNA"/>
</dbReference>
<dbReference type="RefSeq" id="NP_462342.1">
    <property type="nucleotide sequence ID" value="NC_003197.2"/>
</dbReference>
<dbReference type="RefSeq" id="WP_000617546.1">
    <property type="nucleotide sequence ID" value="NC_003197.2"/>
</dbReference>
<dbReference type="SMR" id="Q7CPL3"/>
<dbReference type="STRING" id="99287.STM3438"/>
<dbReference type="PaxDb" id="99287-STM3438"/>
<dbReference type="GeneID" id="1254961"/>
<dbReference type="GeneID" id="98390440"/>
<dbReference type="KEGG" id="stm:STM3438"/>
<dbReference type="PATRIC" id="fig|99287.12.peg.3635"/>
<dbReference type="HOGENOM" id="CLU_037562_3_1_6"/>
<dbReference type="OMA" id="DHRAAKP"/>
<dbReference type="PhylomeDB" id="Q7CPL3"/>
<dbReference type="BioCyc" id="SENT99287:STM3438-MONOMER"/>
<dbReference type="PRO" id="PR:Q7CPL3"/>
<dbReference type="Proteomes" id="UP000001014">
    <property type="component" value="Chromosome"/>
</dbReference>
<dbReference type="GO" id="GO:0022625">
    <property type="term" value="C:cytosolic large ribosomal subunit"/>
    <property type="evidence" value="ECO:0000318"/>
    <property type="project" value="GO_Central"/>
</dbReference>
<dbReference type="GO" id="GO:0019843">
    <property type="term" value="F:rRNA binding"/>
    <property type="evidence" value="ECO:0007669"/>
    <property type="project" value="UniProtKB-UniRule"/>
</dbReference>
<dbReference type="GO" id="GO:0003735">
    <property type="term" value="F:structural constituent of ribosome"/>
    <property type="evidence" value="ECO:0000318"/>
    <property type="project" value="GO_Central"/>
</dbReference>
<dbReference type="GO" id="GO:0006412">
    <property type="term" value="P:translation"/>
    <property type="evidence" value="ECO:0007669"/>
    <property type="project" value="UniProtKB-UniRule"/>
</dbReference>
<dbReference type="FunFam" id="3.30.70.330:FF:000001">
    <property type="entry name" value="50S ribosomal protein L23"/>
    <property type="match status" value="1"/>
</dbReference>
<dbReference type="Gene3D" id="3.30.70.330">
    <property type="match status" value="1"/>
</dbReference>
<dbReference type="HAMAP" id="MF_01369_B">
    <property type="entry name" value="Ribosomal_uL23_B"/>
    <property type="match status" value="1"/>
</dbReference>
<dbReference type="InterPro" id="IPR012677">
    <property type="entry name" value="Nucleotide-bd_a/b_plait_sf"/>
</dbReference>
<dbReference type="InterPro" id="IPR013025">
    <property type="entry name" value="Ribosomal_uL23-like"/>
</dbReference>
<dbReference type="InterPro" id="IPR012678">
    <property type="entry name" value="Ribosomal_uL23/eL15/eS24_sf"/>
</dbReference>
<dbReference type="InterPro" id="IPR001014">
    <property type="entry name" value="Ribosomal_uL23_CS"/>
</dbReference>
<dbReference type="NCBIfam" id="NF004358">
    <property type="entry name" value="PRK05738.1-1"/>
    <property type="match status" value="1"/>
</dbReference>
<dbReference type="NCBIfam" id="NF004359">
    <property type="entry name" value="PRK05738.1-3"/>
    <property type="match status" value="1"/>
</dbReference>
<dbReference type="NCBIfam" id="NF004363">
    <property type="entry name" value="PRK05738.2-4"/>
    <property type="match status" value="1"/>
</dbReference>
<dbReference type="PANTHER" id="PTHR11620">
    <property type="entry name" value="60S RIBOSOMAL PROTEIN L23A"/>
    <property type="match status" value="1"/>
</dbReference>
<dbReference type="Pfam" id="PF00276">
    <property type="entry name" value="Ribosomal_L23"/>
    <property type="match status" value="1"/>
</dbReference>
<dbReference type="SUPFAM" id="SSF54189">
    <property type="entry name" value="Ribosomal proteins S24e, L23 and L15e"/>
    <property type="match status" value="1"/>
</dbReference>
<dbReference type="PROSITE" id="PS00050">
    <property type="entry name" value="RIBOSOMAL_L23"/>
    <property type="match status" value="1"/>
</dbReference>
<keyword id="KW-1185">Reference proteome</keyword>
<keyword id="KW-0687">Ribonucleoprotein</keyword>
<keyword id="KW-0689">Ribosomal protein</keyword>
<keyword id="KW-0694">RNA-binding</keyword>
<keyword id="KW-0699">rRNA-binding</keyword>
<reference key="1">
    <citation type="journal article" date="2001" name="Nature">
        <title>Complete genome sequence of Salmonella enterica serovar Typhimurium LT2.</title>
        <authorList>
            <person name="McClelland M."/>
            <person name="Sanderson K.E."/>
            <person name="Spieth J."/>
            <person name="Clifton S.W."/>
            <person name="Latreille P."/>
            <person name="Courtney L."/>
            <person name="Porwollik S."/>
            <person name="Ali J."/>
            <person name="Dante M."/>
            <person name="Du F."/>
            <person name="Hou S."/>
            <person name="Layman D."/>
            <person name="Leonard S."/>
            <person name="Nguyen C."/>
            <person name="Scott K."/>
            <person name="Holmes A."/>
            <person name="Grewal N."/>
            <person name="Mulvaney E."/>
            <person name="Ryan E."/>
            <person name="Sun H."/>
            <person name="Florea L."/>
            <person name="Miller W."/>
            <person name="Stoneking T."/>
            <person name="Nhan M."/>
            <person name="Waterston R."/>
            <person name="Wilson R.K."/>
        </authorList>
    </citation>
    <scope>NUCLEOTIDE SEQUENCE [LARGE SCALE GENOMIC DNA]</scope>
    <source>
        <strain>LT2 / SGSC1412 / ATCC 700720</strain>
    </source>
</reference>
<name>RL23_SALTY</name>